<name>MTNN_SALPK</name>
<comment type="function">
    <text evidence="1">Catalyzes the irreversible cleavage of the glycosidic bond in both 5'-methylthioadenosine (MTA) and S-adenosylhomocysteine (SAH/AdoHcy) to adenine and the corresponding thioribose, 5'-methylthioribose and S-ribosylhomocysteine, respectively. Also cleaves 5'-deoxyadenosine, a toxic by-product of radical S-adenosylmethionine (SAM) enzymes, into 5-deoxyribose and adenine. Thus, is required for in vivo function of the radical SAM enzymes biotin synthase and lipoic acid synthase, that are inhibited by 5'-deoxyadenosine accumulation.</text>
</comment>
<comment type="catalytic activity">
    <reaction evidence="1">
        <text>S-adenosyl-L-homocysteine + H2O = S-(5-deoxy-D-ribos-5-yl)-L-homocysteine + adenine</text>
        <dbReference type="Rhea" id="RHEA:17805"/>
        <dbReference type="ChEBI" id="CHEBI:15377"/>
        <dbReference type="ChEBI" id="CHEBI:16708"/>
        <dbReference type="ChEBI" id="CHEBI:57856"/>
        <dbReference type="ChEBI" id="CHEBI:58195"/>
        <dbReference type="EC" id="3.2.2.9"/>
    </reaction>
</comment>
<comment type="catalytic activity">
    <reaction evidence="1">
        <text>S-methyl-5'-thioadenosine + H2O = 5-(methylsulfanyl)-D-ribose + adenine</text>
        <dbReference type="Rhea" id="RHEA:13617"/>
        <dbReference type="ChEBI" id="CHEBI:15377"/>
        <dbReference type="ChEBI" id="CHEBI:16708"/>
        <dbReference type="ChEBI" id="CHEBI:17509"/>
        <dbReference type="ChEBI" id="CHEBI:78440"/>
        <dbReference type="EC" id="3.2.2.9"/>
    </reaction>
</comment>
<comment type="catalytic activity">
    <reaction evidence="1">
        <text>5'-deoxyadenosine + H2O = 5-deoxy-D-ribose + adenine</text>
        <dbReference type="Rhea" id="RHEA:29859"/>
        <dbReference type="ChEBI" id="CHEBI:15377"/>
        <dbReference type="ChEBI" id="CHEBI:16708"/>
        <dbReference type="ChEBI" id="CHEBI:17319"/>
        <dbReference type="ChEBI" id="CHEBI:149540"/>
        <dbReference type="EC" id="3.2.2.9"/>
    </reaction>
    <physiologicalReaction direction="left-to-right" evidence="1">
        <dbReference type="Rhea" id="RHEA:29860"/>
    </physiologicalReaction>
</comment>
<comment type="pathway">
    <text evidence="1">Amino-acid biosynthesis; L-methionine biosynthesis via salvage pathway; S-methyl-5-thio-alpha-D-ribose 1-phosphate from S-methyl-5'-thioadenosine (hydrolase route): step 1/2.</text>
</comment>
<comment type="subunit">
    <text evidence="1">Homodimer.</text>
</comment>
<comment type="similarity">
    <text evidence="1">Belongs to the PNP/UDP phosphorylase family. MtnN subfamily.</text>
</comment>
<organism>
    <name type="scientific">Salmonella paratyphi A (strain AKU_12601)</name>
    <dbReference type="NCBI Taxonomy" id="554290"/>
    <lineage>
        <taxon>Bacteria</taxon>
        <taxon>Pseudomonadati</taxon>
        <taxon>Pseudomonadota</taxon>
        <taxon>Gammaproteobacteria</taxon>
        <taxon>Enterobacterales</taxon>
        <taxon>Enterobacteriaceae</taxon>
        <taxon>Salmonella</taxon>
    </lineage>
</organism>
<dbReference type="EC" id="3.2.2.9" evidence="1"/>
<dbReference type="EMBL" id="FM200053">
    <property type="protein sequence ID" value="CAR58320.1"/>
    <property type="molecule type" value="Genomic_DNA"/>
</dbReference>
<dbReference type="RefSeq" id="WP_000689821.1">
    <property type="nucleotide sequence ID" value="NC_011147.1"/>
</dbReference>
<dbReference type="SMR" id="B5BL87"/>
<dbReference type="KEGG" id="sek:SSPA0206"/>
<dbReference type="HOGENOM" id="CLU_031248_2_2_6"/>
<dbReference type="UniPathway" id="UPA00904">
    <property type="reaction ID" value="UER00871"/>
</dbReference>
<dbReference type="Proteomes" id="UP000001869">
    <property type="component" value="Chromosome"/>
</dbReference>
<dbReference type="GO" id="GO:0005829">
    <property type="term" value="C:cytosol"/>
    <property type="evidence" value="ECO:0007669"/>
    <property type="project" value="TreeGrafter"/>
</dbReference>
<dbReference type="GO" id="GO:0008782">
    <property type="term" value="F:adenosylhomocysteine nucleosidase activity"/>
    <property type="evidence" value="ECO:0007669"/>
    <property type="project" value="UniProtKB-UniRule"/>
</dbReference>
<dbReference type="GO" id="GO:0008930">
    <property type="term" value="F:methylthioadenosine nucleosidase activity"/>
    <property type="evidence" value="ECO:0007669"/>
    <property type="project" value="UniProtKB-UniRule"/>
</dbReference>
<dbReference type="GO" id="GO:0019509">
    <property type="term" value="P:L-methionine salvage from methylthioadenosine"/>
    <property type="evidence" value="ECO:0007669"/>
    <property type="project" value="UniProtKB-UniRule"/>
</dbReference>
<dbReference type="GO" id="GO:0019284">
    <property type="term" value="P:L-methionine salvage from S-adenosylmethionine"/>
    <property type="evidence" value="ECO:0007669"/>
    <property type="project" value="TreeGrafter"/>
</dbReference>
<dbReference type="GO" id="GO:0046124">
    <property type="term" value="P:purine deoxyribonucleoside catabolic process"/>
    <property type="evidence" value="ECO:0007669"/>
    <property type="project" value="UniProtKB-UniRule"/>
</dbReference>
<dbReference type="CDD" id="cd09008">
    <property type="entry name" value="MTAN"/>
    <property type="match status" value="1"/>
</dbReference>
<dbReference type="FunFam" id="3.40.50.1580:FF:000001">
    <property type="entry name" value="MTA/SAH nucleosidase family protein"/>
    <property type="match status" value="1"/>
</dbReference>
<dbReference type="Gene3D" id="3.40.50.1580">
    <property type="entry name" value="Nucleoside phosphorylase domain"/>
    <property type="match status" value="1"/>
</dbReference>
<dbReference type="HAMAP" id="MF_01684">
    <property type="entry name" value="Salvage_MtnN"/>
    <property type="match status" value="1"/>
</dbReference>
<dbReference type="InterPro" id="IPR010049">
    <property type="entry name" value="MTA_SAH_Nsdase"/>
</dbReference>
<dbReference type="InterPro" id="IPR000845">
    <property type="entry name" value="Nucleoside_phosphorylase_d"/>
</dbReference>
<dbReference type="InterPro" id="IPR035994">
    <property type="entry name" value="Nucleoside_phosphorylase_sf"/>
</dbReference>
<dbReference type="NCBIfam" id="TIGR01704">
    <property type="entry name" value="MTA_SAH-Nsdase"/>
    <property type="match status" value="1"/>
</dbReference>
<dbReference type="NCBIfam" id="NF004079">
    <property type="entry name" value="PRK05584.1"/>
    <property type="match status" value="1"/>
</dbReference>
<dbReference type="PANTHER" id="PTHR46832">
    <property type="entry name" value="5'-METHYLTHIOADENOSINE/S-ADENOSYLHOMOCYSTEINE NUCLEOSIDASE"/>
    <property type="match status" value="1"/>
</dbReference>
<dbReference type="PANTHER" id="PTHR46832:SF1">
    <property type="entry name" value="5'-METHYLTHIOADENOSINE_S-ADENOSYLHOMOCYSTEINE NUCLEOSIDASE"/>
    <property type="match status" value="1"/>
</dbReference>
<dbReference type="Pfam" id="PF01048">
    <property type="entry name" value="PNP_UDP_1"/>
    <property type="match status" value="1"/>
</dbReference>
<dbReference type="SUPFAM" id="SSF53167">
    <property type="entry name" value="Purine and uridine phosphorylases"/>
    <property type="match status" value="1"/>
</dbReference>
<feature type="chain" id="PRO_0000359335" description="5'-methylthioadenosine/S-adenosylhomocysteine nucleosidase">
    <location>
        <begin position="1"/>
        <end position="232"/>
    </location>
</feature>
<feature type="active site" description="Proton acceptor" evidence="1">
    <location>
        <position position="12"/>
    </location>
</feature>
<feature type="active site" description="Proton donor" evidence="1">
    <location>
        <position position="197"/>
    </location>
</feature>
<feature type="binding site" evidence="1">
    <location>
        <position position="78"/>
    </location>
    <ligand>
        <name>substrate</name>
    </ligand>
</feature>
<feature type="binding site" evidence="1">
    <location>
        <position position="152"/>
    </location>
    <ligand>
        <name>substrate</name>
    </ligand>
</feature>
<feature type="binding site" evidence="1">
    <location>
        <begin position="173"/>
        <end position="174"/>
    </location>
    <ligand>
        <name>substrate</name>
    </ligand>
</feature>
<evidence type="ECO:0000255" key="1">
    <source>
        <dbReference type="HAMAP-Rule" id="MF_01684"/>
    </source>
</evidence>
<protein>
    <recommendedName>
        <fullName evidence="1">5'-methylthioadenosine/S-adenosylhomocysteine nucleosidase</fullName>
        <shortName evidence="1">MTA/SAH nucleosidase</shortName>
        <shortName evidence="1">MTAN</shortName>
        <ecNumber evidence="1">3.2.2.9</ecNumber>
    </recommendedName>
    <alternativeName>
        <fullName evidence="1">5'-deoxyadenosine nucleosidase</fullName>
        <shortName evidence="1">DOA nucleosidase</shortName>
        <shortName evidence="1">dAdo nucleosidase</shortName>
    </alternativeName>
    <alternativeName>
        <fullName evidence="1">5'-methylthioadenosine nucleosidase</fullName>
        <shortName evidence="1">MTA nucleosidase</shortName>
    </alternativeName>
    <alternativeName>
        <fullName evidence="1">S-adenosylhomocysteine nucleosidase</fullName>
        <shortName evidence="1">AdoHcy nucleosidase</shortName>
        <shortName evidence="1">SAH nucleosidase</shortName>
        <shortName evidence="1">SRH nucleosidase</shortName>
    </alternativeName>
</protein>
<keyword id="KW-0028">Amino-acid biosynthesis</keyword>
<keyword id="KW-0378">Hydrolase</keyword>
<keyword id="KW-0486">Methionine biosynthesis</keyword>
<sequence length="232" mass="24446">MKIGIIGAMEEEVTLLRDKIDNRQTITLGGCEIYTGQLNGTEVALLKSGIGKVAAALGATLLLEHCKPDVIINTGSAGGLASTLKVGDIVVSDEARYHDADVTAFGYEYGQLPGCPAGFKADDKLIAAAESCIRELNLNAVRGLIVSGDAFINGSVGLAKIRHNFPDAVAVEMEATAIAHVCHNFNVPFVVVRAISDVADQQSHLSFDEFLAVAAKQSTLMVETLVQKLAHG</sequence>
<accession>B5BL87</accession>
<reference key="1">
    <citation type="journal article" date="2009" name="BMC Genomics">
        <title>Pseudogene accumulation in the evolutionary histories of Salmonella enterica serovars Paratyphi A and Typhi.</title>
        <authorList>
            <person name="Holt K.E."/>
            <person name="Thomson N.R."/>
            <person name="Wain J."/>
            <person name="Langridge G.C."/>
            <person name="Hasan R."/>
            <person name="Bhutta Z.A."/>
            <person name="Quail M.A."/>
            <person name="Norbertczak H."/>
            <person name="Walker D."/>
            <person name="Simmonds M."/>
            <person name="White B."/>
            <person name="Bason N."/>
            <person name="Mungall K."/>
            <person name="Dougan G."/>
            <person name="Parkhill J."/>
        </authorList>
    </citation>
    <scope>NUCLEOTIDE SEQUENCE [LARGE SCALE GENOMIC DNA]</scope>
    <source>
        <strain>AKU_12601</strain>
    </source>
</reference>
<gene>
    <name evidence="1" type="primary">mtnN</name>
    <name type="ordered locus">SSPA0206</name>
</gene>
<proteinExistence type="inferred from homology"/>